<keyword id="KW-0472">Membrane</keyword>
<keyword id="KW-0812">Transmembrane</keyword>
<keyword id="KW-1133">Transmembrane helix</keyword>
<name>YP012_YEAST</name>
<proteinExistence type="uncertain"/>
<gene>
    <name type="ordered locus">YPR012W</name>
    <name type="ORF">YP9531.05</name>
</gene>
<dbReference type="EMBL" id="AY693319">
    <property type="protein sequence ID" value="AAT93338.1"/>
    <property type="molecule type" value="Genomic_DNA"/>
</dbReference>
<dbReference type="EMBL" id="Z49919">
    <property type="protein sequence ID" value="CAA90156.1"/>
    <property type="molecule type" value="Genomic_DNA"/>
</dbReference>
<dbReference type="PIR" id="S57545">
    <property type="entry name" value="S57545"/>
</dbReference>
<dbReference type="PaxDb" id="4932-YPR012W"/>
<dbReference type="TopDownProteomics" id="Q04203"/>
<dbReference type="EnsemblFungi" id="YPR012W_mRNA">
    <property type="protein sequence ID" value="YPR012W"/>
    <property type="gene ID" value="YPR012W"/>
</dbReference>
<dbReference type="AGR" id="SGD:S000006216"/>
<dbReference type="SGD" id="S000006216">
    <property type="gene designation" value="YPR012W"/>
</dbReference>
<dbReference type="HOGENOM" id="CLU_2529187_0_0_1"/>
<dbReference type="GO" id="GO:0016020">
    <property type="term" value="C:membrane"/>
    <property type="evidence" value="ECO:0007669"/>
    <property type="project" value="UniProtKB-SubCell"/>
</dbReference>
<organism>
    <name type="scientific">Saccharomyces cerevisiae (strain ATCC 204508 / S288c)</name>
    <name type="common">Baker's yeast</name>
    <dbReference type="NCBI Taxonomy" id="559292"/>
    <lineage>
        <taxon>Eukaryota</taxon>
        <taxon>Fungi</taxon>
        <taxon>Dikarya</taxon>
        <taxon>Ascomycota</taxon>
        <taxon>Saccharomycotina</taxon>
        <taxon>Saccharomycetes</taxon>
        <taxon>Saccharomycetales</taxon>
        <taxon>Saccharomycetaceae</taxon>
        <taxon>Saccharomyces</taxon>
    </lineage>
</organism>
<accession>Q04203</accession>
<feature type="chain" id="PRO_0000299814" description="Putative uncharacterized protein YPR012W">
    <location>
        <begin position="1"/>
        <end position="84"/>
    </location>
</feature>
<feature type="transmembrane region" description="Helical" evidence="1">
    <location>
        <begin position="10"/>
        <end position="32"/>
    </location>
</feature>
<reference key="1">
    <citation type="journal article" date="1997" name="Nature">
        <title>The nucleotide sequence of Saccharomyces cerevisiae chromosome XVI.</title>
        <authorList>
            <person name="Bussey H."/>
            <person name="Storms R.K."/>
            <person name="Ahmed A."/>
            <person name="Albermann K."/>
            <person name="Allen E."/>
            <person name="Ansorge W."/>
            <person name="Araujo R."/>
            <person name="Aparicio A."/>
            <person name="Barrell B.G."/>
            <person name="Badcock K."/>
            <person name="Benes V."/>
            <person name="Botstein D."/>
            <person name="Bowman S."/>
            <person name="Brueckner M."/>
            <person name="Carpenter J."/>
            <person name="Cherry J.M."/>
            <person name="Chung E."/>
            <person name="Churcher C.M."/>
            <person name="Coster F."/>
            <person name="Davis K."/>
            <person name="Davis R.W."/>
            <person name="Dietrich F.S."/>
            <person name="Delius H."/>
            <person name="DiPaolo T."/>
            <person name="Dubois E."/>
            <person name="Duesterhoeft A."/>
            <person name="Duncan M."/>
            <person name="Floeth M."/>
            <person name="Fortin N."/>
            <person name="Friesen J.D."/>
            <person name="Fritz C."/>
            <person name="Goffeau A."/>
            <person name="Hall J."/>
            <person name="Hebling U."/>
            <person name="Heumann K."/>
            <person name="Hilbert H."/>
            <person name="Hillier L.W."/>
            <person name="Hunicke-Smith S."/>
            <person name="Hyman R.W."/>
            <person name="Johnston M."/>
            <person name="Kalman S."/>
            <person name="Kleine K."/>
            <person name="Komp C."/>
            <person name="Kurdi O."/>
            <person name="Lashkari D."/>
            <person name="Lew H."/>
            <person name="Lin A."/>
            <person name="Lin D."/>
            <person name="Louis E.J."/>
            <person name="Marathe R."/>
            <person name="Messenguy F."/>
            <person name="Mewes H.-W."/>
            <person name="Mirtipati S."/>
            <person name="Moestl D."/>
            <person name="Mueller-Auer S."/>
            <person name="Namath A."/>
            <person name="Nentwich U."/>
            <person name="Oefner P."/>
            <person name="Pearson D."/>
            <person name="Petel F.X."/>
            <person name="Pohl T.M."/>
            <person name="Purnelle B."/>
            <person name="Rajandream M.A."/>
            <person name="Rechmann S."/>
            <person name="Rieger M."/>
            <person name="Riles L."/>
            <person name="Roberts D."/>
            <person name="Schaefer M."/>
            <person name="Scharfe M."/>
            <person name="Scherens B."/>
            <person name="Schramm S."/>
            <person name="Schroeder M."/>
            <person name="Sdicu A.-M."/>
            <person name="Tettelin H."/>
            <person name="Urrestarazu L.A."/>
            <person name="Ushinsky S."/>
            <person name="Vierendeels F."/>
            <person name="Vissers S."/>
            <person name="Voss H."/>
            <person name="Walsh S.V."/>
            <person name="Wambutt R."/>
            <person name="Wang Y."/>
            <person name="Wedler E."/>
            <person name="Wedler H."/>
            <person name="Winnett E."/>
            <person name="Zhong W.-W."/>
            <person name="Zollner A."/>
            <person name="Vo D.H."/>
            <person name="Hani J."/>
        </authorList>
    </citation>
    <scope>NUCLEOTIDE SEQUENCE [LARGE SCALE GENOMIC DNA]</scope>
    <source>
        <strain>ATCC 204508 / S288c</strain>
    </source>
</reference>
<reference key="2">
    <citation type="journal article" date="2014" name="G3 (Bethesda)">
        <title>The reference genome sequence of Saccharomyces cerevisiae: Then and now.</title>
        <authorList>
            <person name="Engel S.R."/>
            <person name="Dietrich F.S."/>
            <person name="Fisk D.G."/>
            <person name="Binkley G."/>
            <person name="Balakrishnan R."/>
            <person name="Costanzo M.C."/>
            <person name="Dwight S.S."/>
            <person name="Hitz B.C."/>
            <person name="Karra K."/>
            <person name="Nash R.S."/>
            <person name="Weng S."/>
            <person name="Wong E.D."/>
            <person name="Lloyd P."/>
            <person name="Skrzypek M.S."/>
            <person name="Miyasato S.R."/>
            <person name="Simison M."/>
            <person name="Cherry J.M."/>
        </authorList>
    </citation>
    <scope>GENOME REANNOTATION</scope>
    <source>
        <strain>ATCC 204508 / S288c</strain>
    </source>
</reference>
<reference key="3">
    <citation type="journal article" date="2007" name="Genome Res.">
        <title>Approaching a complete repository of sequence-verified protein-encoding clones for Saccharomyces cerevisiae.</title>
        <authorList>
            <person name="Hu Y."/>
            <person name="Rolfs A."/>
            <person name="Bhullar B."/>
            <person name="Murthy T.V.S."/>
            <person name="Zhu C."/>
            <person name="Berger M.F."/>
            <person name="Camargo A.A."/>
            <person name="Kelley F."/>
            <person name="McCarron S."/>
            <person name="Jepson D."/>
            <person name="Richardson A."/>
            <person name="Raphael J."/>
            <person name="Moreira D."/>
            <person name="Taycher E."/>
            <person name="Zuo D."/>
            <person name="Mohr S."/>
            <person name="Kane M.F."/>
            <person name="Williamson J."/>
            <person name="Simpson A.J.G."/>
            <person name="Bulyk M.L."/>
            <person name="Harlow E."/>
            <person name="Marsischky G."/>
            <person name="Kolodner R.D."/>
            <person name="LaBaer J."/>
        </authorList>
    </citation>
    <scope>NUCLEOTIDE SEQUENCE [GENOMIC DNA]</scope>
    <source>
        <strain>ATCC 204508 / S288c</strain>
    </source>
</reference>
<evidence type="ECO:0000255" key="1"/>
<evidence type="ECO:0000305" key="2"/>
<evidence type="ECO:0000305" key="3">
    <source>
    </source>
</evidence>
<sequence>MELSQYLNYAFSLAYYIIIHLLCLSYIYEIIHKHKNVFVRPSKLEDALPLYKTGKNTNKEGDLRLISFIPLLLKSVKHSIRVYT</sequence>
<comment type="subcellular location">
    <subcellularLocation>
        <location evidence="2">Membrane</location>
        <topology evidence="2">Single-pass membrane protein</topology>
    </subcellularLocation>
</comment>
<comment type="caution">
    <text evidence="3">Product of a dubious gene prediction unlikely to encode a functional protein. Because of that it is not part of the S.cerevisiae S288c complete/reference proteome set.</text>
</comment>
<protein>
    <recommendedName>
        <fullName>Putative uncharacterized protein YPR012W</fullName>
    </recommendedName>
</protein>